<organism>
    <name type="scientific">Mus musculus</name>
    <name type="common">Mouse</name>
    <dbReference type="NCBI Taxonomy" id="10090"/>
    <lineage>
        <taxon>Eukaryota</taxon>
        <taxon>Metazoa</taxon>
        <taxon>Chordata</taxon>
        <taxon>Craniata</taxon>
        <taxon>Vertebrata</taxon>
        <taxon>Euteleostomi</taxon>
        <taxon>Mammalia</taxon>
        <taxon>Eutheria</taxon>
        <taxon>Euarchontoglires</taxon>
        <taxon>Glires</taxon>
        <taxon>Rodentia</taxon>
        <taxon>Myomorpha</taxon>
        <taxon>Muroidea</taxon>
        <taxon>Muridae</taxon>
        <taxon>Murinae</taxon>
        <taxon>Mus</taxon>
        <taxon>Mus</taxon>
    </lineage>
</organism>
<accession>O35615</accession>
<proteinExistence type="evidence at protein level"/>
<evidence type="ECO:0000250" key="1">
    <source>
        <dbReference type="UniProtKB" id="Q8IX07"/>
    </source>
</evidence>
<evidence type="ECO:0000255" key="2">
    <source>
        <dbReference type="PROSITE-ProRule" id="PRU00042"/>
    </source>
</evidence>
<evidence type="ECO:0000255" key="3">
    <source>
        <dbReference type="PROSITE-ProRule" id="PRU01153"/>
    </source>
</evidence>
<evidence type="ECO:0000256" key="4">
    <source>
        <dbReference type="SAM" id="MobiDB-lite"/>
    </source>
</evidence>
<evidence type="ECO:0000269" key="5">
    <source>
    </source>
</evidence>
<evidence type="ECO:0000269" key="6">
    <source>
    </source>
</evidence>
<evidence type="ECO:0000269" key="7">
    <source>
    </source>
</evidence>
<evidence type="ECO:0000269" key="8">
    <source>
    </source>
</evidence>
<evidence type="ECO:0000269" key="9">
    <source>
    </source>
</evidence>
<evidence type="ECO:0000269" key="10">
    <source>
    </source>
</evidence>
<evidence type="ECO:0000269" key="11">
    <source>
    </source>
</evidence>
<evidence type="ECO:0000269" key="12">
    <source>
    </source>
</evidence>
<evidence type="ECO:0000269" key="13">
    <source>
    </source>
</evidence>
<evidence type="ECO:0007744" key="14">
    <source>
    </source>
</evidence>
<evidence type="ECO:0007744" key="15">
    <source>
    </source>
</evidence>
<evidence type="ECO:0007829" key="16">
    <source>
        <dbReference type="PDB" id="1SRK"/>
    </source>
</evidence>
<evidence type="ECO:0007829" key="17">
    <source>
        <dbReference type="PDB" id="2MPL"/>
    </source>
</evidence>
<dbReference type="EMBL" id="AF006492">
    <property type="protein sequence ID" value="AAC53292.1"/>
    <property type="molecule type" value="mRNA"/>
</dbReference>
<dbReference type="CCDS" id="CCDS22733.1"/>
<dbReference type="RefSeq" id="NP_033595.1">
    <property type="nucleotide sequence ID" value="NM_009569.4"/>
</dbReference>
<dbReference type="RefSeq" id="XP_006530914.1">
    <property type="nucleotide sequence ID" value="XM_006530851.5"/>
</dbReference>
<dbReference type="PDB" id="1SRK">
    <property type="method" value="NMR"/>
    <property type="chains" value="A=328-360"/>
</dbReference>
<dbReference type="PDB" id="2MPL">
    <property type="method" value="NMR"/>
    <property type="chains" value="A=100-226"/>
</dbReference>
<dbReference type="PDBsum" id="1SRK"/>
<dbReference type="PDBsum" id="2MPL"/>
<dbReference type="BMRB" id="O35615"/>
<dbReference type="SMR" id="O35615"/>
<dbReference type="BioGRID" id="204687">
    <property type="interactions" value="12"/>
</dbReference>
<dbReference type="CORUM" id="O35615"/>
<dbReference type="DIP" id="DIP-48414N"/>
<dbReference type="FunCoup" id="O35615">
    <property type="interactions" value="285"/>
</dbReference>
<dbReference type="IntAct" id="O35615">
    <property type="interactions" value="14"/>
</dbReference>
<dbReference type="MINT" id="O35615"/>
<dbReference type="STRING" id="10090.ENSMUSP00000058037"/>
<dbReference type="GlyGen" id="O35615">
    <property type="glycosylation" value="4 sites"/>
</dbReference>
<dbReference type="iPTMnet" id="O35615"/>
<dbReference type="PhosphoSitePlus" id="O35615"/>
<dbReference type="jPOST" id="O35615"/>
<dbReference type="PaxDb" id="10090-ENSMUSP00000058037"/>
<dbReference type="PeptideAtlas" id="O35615"/>
<dbReference type="ProteomicsDB" id="271783"/>
<dbReference type="Antibodypedia" id="30722">
    <property type="antibodies" value="122 antibodies from 24 providers"/>
</dbReference>
<dbReference type="DNASU" id="22761"/>
<dbReference type="Ensembl" id="ENSMUST00000054052.15">
    <property type="protein sequence ID" value="ENSMUSP00000058037.9"/>
    <property type="gene ID" value="ENSMUSG00000049577.16"/>
</dbReference>
<dbReference type="GeneID" id="22761"/>
<dbReference type="KEGG" id="mmu:22761"/>
<dbReference type="UCSC" id="uc009nsj.1">
    <property type="organism name" value="mouse"/>
</dbReference>
<dbReference type="AGR" id="MGI:1095400"/>
<dbReference type="CTD" id="161882"/>
<dbReference type="MGI" id="MGI:1095400">
    <property type="gene designation" value="Zfpm1"/>
</dbReference>
<dbReference type="VEuPathDB" id="HostDB:ENSMUSG00000049577"/>
<dbReference type="eggNOG" id="KOG1721">
    <property type="taxonomic scope" value="Eukaryota"/>
</dbReference>
<dbReference type="GeneTree" id="ENSGT00530000063823"/>
<dbReference type="HOGENOM" id="CLU_010755_0_0_1"/>
<dbReference type="InParanoid" id="O35615"/>
<dbReference type="OMA" id="DCGIWFR"/>
<dbReference type="OrthoDB" id="8742770at2759"/>
<dbReference type="PhylomeDB" id="O35615"/>
<dbReference type="TreeFam" id="TF331342"/>
<dbReference type="Reactome" id="R-MMU-8936459">
    <property type="pathway name" value="RUNX1 regulates genes involved in megakaryocyte differentiation and platelet function"/>
</dbReference>
<dbReference type="Reactome" id="R-MMU-983231">
    <property type="pathway name" value="Factors involved in megakaryocyte development and platelet production"/>
</dbReference>
<dbReference type="BioGRID-ORCS" id="22761">
    <property type="hits" value="5 hits in 81 CRISPR screens"/>
</dbReference>
<dbReference type="ChiTaRS" id="Apaf1">
    <property type="organism name" value="mouse"/>
</dbReference>
<dbReference type="EvolutionaryTrace" id="O35615"/>
<dbReference type="PRO" id="PR:O35615"/>
<dbReference type="Proteomes" id="UP000000589">
    <property type="component" value="Chromosome 8"/>
</dbReference>
<dbReference type="RNAct" id="O35615">
    <property type="molecule type" value="protein"/>
</dbReference>
<dbReference type="Bgee" id="ENSMUSG00000049577">
    <property type="expression patterns" value="Expressed in femorotibial joint and 203 other cell types or tissues"/>
</dbReference>
<dbReference type="GO" id="GO:0005737">
    <property type="term" value="C:cytoplasm"/>
    <property type="evidence" value="ECO:0000314"/>
    <property type="project" value="MGI"/>
</dbReference>
<dbReference type="GO" id="GO:0005634">
    <property type="term" value="C:nucleus"/>
    <property type="evidence" value="ECO:0000314"/>
    <property type="project" value="MGI"/>
</dbReference>
<dbReference type="GO" id="GO:0017053">
    <property type="term" value="C:transcription repressor complex"/>
    <property type="evidence" value="ECO:0007669"/>
    <property type="project" value="Ensembl"/>
</dbReference>
<dbReference type="GO" id="GO:0003677">
    <property type="term" value="F:DNA binding"/>
    <property type="evidence" value="ECO:0007669"/>
    <property type="project" value="UniProtKB-KW"/>
</dbReference>
<dbReference type="GO" id="GO:0061629">
    <property type="term" value="F:RNA polymerase II-specific DNA-binding transcription factor binding"/>
    <property type="evidence" value="ECO:0000314"/>
    <property type="project" value="MGI"/>
</dbReference>
<dbReference type="GO" id="GO:0003714">
    <property type="term" value="F:transcription corepressor activity"/>
    <property type="evidence" value="ECO:0000304"/>
    <property type="project" value="MGI"/>
</dbReference>
<dbReference type="GO" id="GO:0008270">
    <property type="term" value="F:zinc ion binding"/>
    <property type="evidence" value="ECO:0007669"/>
    <property type="project" value="UniProtKB-KW"/>
</dbReference>
<dbReference type="GO" id="GO:0060413">
    <property type="term" value="P:atrial septum morphogenesis"/>
    <property type="evidence" value="ECO:0000315"/>
    <property type="project" value="BHF-UCL"/>
</dbReference>
<dbReference type="GO" id="GO:0003181">
    <property type="term" value="P:atrioventricular valve morphogenesis"/>
    <property type="evidence" value="ECO:0000315"/>
    <property type="project" value="BHF-UCL"/>
</dbReference>
<dbReference type="GO" id="GO:0055008">
    <property type="term" value="P:cardiac muscle tissue morphogenesis"/>
    <property type="evidence" value="ECO:0000315"/>
    <property type="project" value="BHF-UCL"/>
</dbReference>
<dbReference type="GO" id="GO:0060318">
    <property type="term" value="P:definitive erythrocyte differentiation"/>
    <property type="evidence" value="ECO:0000315"/>
    <property type="project" value="MGI"/>
</dbReference>
<dbReference type="GO" id="GO:0035162">
    <property type="term" value="P:embryonic hemopoiesis"/>
    <property type="evidence" value="ECO:0000315"/>
    <property type="project" value="BHF-UCL"/>
</dbReference>
<dbReference type="GO" id="GO:0030218">
    <property type="term" value="P:erythrocyte differentiation"/>
    <property type="evidence" value="ECO:0000315"/>
    <property type="project" value="MGI"/>
</dbReference>
<dbReference type="GO" id="GO:0030851">
    <property type="term" value="P:granulocyte differentiation"/>
    <property type="evidence" value="ECO:0000315"/>
    <property type="project" value="MGI"/>
</dbReference>
<dbReference type="GO" id="GO:0007507">
    <property type="term" value="P:heart development"/>
    <property type="evidence" value="ECO:0000315"/>
    <property type="project" value="MGI"/>
</dbReference>
<dbReference type="GO" id="GO:0048872">
    <property type="term" value="P:homeostasis of number of cells"/>
    <property type="evidence" value="ECO:0000315"/>
    <property type="project" value="MGI"/>
</dbReference>
<dbReference type="GO" id="GO:0035855">
    <property type="term" value="P:megakaryocyte development"/>
    <property type="evidence" value="ECO:0000315"/>
    <property type="project" value="MGI"/>
</dbReference>
<dbReference type="GO" id="GO:0030219">
    <property type="term" value="P:megakaryocyte differentiation"/>
    <property type="evidence" value="ECO:0000315"/>
    <property type="project" value="MGI"/>
</dbReference>
<dbReference type="GO" id="GO:0003192">
    <property type="term" value="P:mitral valve formation"/>
    <property type="evidence" value="ECO:0000315"/>
    <property type="project" value="BHF-UCL"/>
</dbReference>
<dbReference type="GO" id="GO:0032713">
    <property type="term" value="P:negative regulation of interleukin-4 production"/>
    <property type="evidence" value="ECO:0007669"/>
    <property type="project" value="Ensembl"/>
</dbReference>
<dbReference type="GO" id="GO:0060377">
    <property type="term" value="P:negative regulation of mast cell differentiation"/>
    <property type="evidence" value="ECO:0000314"/>
    <property type="project" value="BHF-UCL"/>
</dbReference>
<dbReference type="GO" id="GO:0000122">
    <property type="term" value="P:negative regulation of transcription by RNA polymerase II"/>
    <property type="evidence" value="ECO:0000314"/>
    <property type="project" value="MGI"/>
</dbReference>
<dbReference type="GO" id="GO:0003151">
    <property type="term" value="P:outflow tract morphogenesis"/>
    <property type="evidence" value="ECO:0000315"/>
    <property type="project" value="BHF-UCL"/>
</dbReference>
<dbReference type="GO" id="GO:0030220">
    <property type="term" value="P:platelet formation"/>
    <property type="evidence" value="ECO:0007669"/>
    <property type="project" value="Ensembl"/>
</dbReference>
<dbReference type="GO" id="GO:0045944">
    <property type="term" value="P:positive regulation of transcription by RNA polymerase II"/>
    <property type="evidence" value="ECO:0000314"/>
    <property type="project" value="MGI"/>
</dbReference>
<dbReference type="GO" id="GO:0032729">
    <property type="term" value="P:positive regulation of type II interferon production"/>
    <property type="evidence" value="ECO:0007669"/>
    <property type="project" value="Ensembl"/>
</dbReference>
<dbReference type="GO" id="GO:0060319">
    <property type="term" value="P:primitive erythrocyte differentiation"/>
    <property type="evidence" value="ECO:0000315"/>
    <property type="project" value="MGI"/>
</dbReference>
<dbReference type="GO" id="GO:0032642">
    <property type="term" value="P:regulation of chemokine production"/>
    <property type="evidence" value="ECO:0000315"/>
    <property type="project" value="MGI"/>
</dbReference>
<dbReference type="GO" id="GO:0010724">
    <property type="term" value="P:regulation of definitive erythrocyte differentiation"/>
    <property type="evidence" value="ECO:0007669"/>
    <property type="project" value="Ensembl"/>
</dbReference>
<dbReference type="GO" id="GO:0003195">
    <property type="term" value="P:tricuspid valve formation"/>
    <property type="evidence" value="ECO:0000315"/>
    <property type="project" value="BHF-UCL"/>
</dbReference>
<dbReference type="GO" id="GO:0060412">
    <property type="term" value="P:ventricular septum morphogenesis"/>
    <property type="evidence" value="ECO:0000315"/>
    <property type="project" value="BHF-UCL"/>
</dbReference>
<dbReference type="CDD" id="cd19215">
    <property type="entry name" value="PR-SET_ZFPM1"/>
    <property type="match status" value="1"/>
</dbReference>
<dbReference type="FunFam" id="3.30.160.60:FF:001079">
    <property type="entry name" value="zinc finger protein ZFPM1 isoform X2"/>
    <property type="match status" value="1"/>
</dbReference>
<dbReference type="FunFam" id="3.30.160.60:FF:000828">
    <property type="entry name" value="Zinc finger protein, FOG family member 1"/>
    <property type="match status" value="1"/>
</dbReference>
<dbReference type="Gene3D" id="3.30.160.60">
    <property type="entry name" value="Classic Zinc Finger"/>
    <property type="match status" value="2"/>
</dbReference>
<dbReference type="IDEAL" id="IID50059"/>
<dbReference type="InterPro" id="IPR039746">
    <property type="entry name" value="FOG"/>
</dbReference>
<dbReference type="InterPro" id="IPR034731">
    <property type="entry name" value="ZF_CCHC_FOG"/>
</dbReference>
<dbReference type="InterPro" id="IPR049361">
    <property type="entry name" value="ZFPM1/2_PR"/>
</dbReference>
<dbReference type="InterPro" id="IPR036236">
    <property type="entry name" value="Znf_C2H2_sf"/>
</dbReference>
<dbReference type="InterPro" id="IPR013087">
    <property type="entry name" value="Znf_C2H2_type"/>
</dbReference>
<dbReference type="PANTHER" id="PTHR12958">
    <property type="entry name" value="FRIEND OF GATA2-RELATED"/>
    <property type="match status" value="1"/>
</dbReference>
<dbReference type="PANTHER" id="PTHR12958:SF4">
    <property type="entry name" value="ZINC FINGER PROTEIN ZFPM1"/>
    <property type="match status" value="1"/>
</dbReference>
<dbReference type="Pfam" id="PF25445">
    <property type="entry name" value="CCHC_ZFPM2"/>
    <property type="match status" value="1"/>
</dbReference>
<dbReference type="Pfam" id="PF21182">
    <property type="entry name" value="FOG1-like_PR"/>
    <property type="match status" value="1"/>
</dbReference>
<dbReference type="Pfam" id="PF00096">
    <property type="entry name" value="zf-C2H2"/>
    <property type="match status" value="1"/>
</dbReference>
<dbReference type="SMART" id="SM00355">
    <property type="entry name" value="ZnF_C2H2"/>
    <property type="match status" value="9"/>
</dbReference>
<dbReference type="SUPFAM" id="SSF57667">
    <property type="entry name" value="beta-beta-alpha zinc fingers"/>
    <property type="match status" value="6"/>
</dbReference>
<dbReference type="PROSITE" id="PS51810">
    <property type="entry name" value="ZF_CCHC_FOG"/>
    <property type="match status" value="5"/>
</dbReference>
<dbReference type="PROSITE" id="PS00028">
    <property type="entry name" value="ZINC_FINGER_C2H2_1"/>
    <property type="match status" value="2"/>
</dbReference>
<dbReference type="PROSITE" id="PS50157">
    <property type="entry name" value="ZINC_FINGER_C2H2_2"/>
    <property type="match status" value="2"/>
</dbReference>
<sequence length="995" mass="105984">MSRRKQSNPRQIKRSLRDMEAGEEAKAMDSSPKEQEAPDPEAPAIEEPPSPPREDVSPPAVPAPPESPEDPEDMEGQELEMRPQDEEKEEKEEEAAMASPWSGPEELELALQDGQRCVRARLSLTEGLSWGPFYGSIQTRALSPEREEPGPAVTLMVDESCWLRMLPQVLTEEAANSEIYRKDDALWCRVTKVVPSGGLLYVRLVTEPHGAPRHPVQEPVEPGGLAPVHTDIQLLPQQAGMASILATAVINKDVFPCKDCGIWYRSERNLQAHLLYYCASRQRAGSPVSATEEKPKETYPNERVCPFPQCRKSCPSASSLEIHMRSHSGERPFVCLICLSAFTTKANCERHLKVHTDTLSGVCHNCGFISTTRDILYSHLVTNHMVCQPGSKGEIYSPGAGHPAAKLPPDSLAGFQQHSLMHSPLVPADKAPTPSSGLDSKAEVTNGETRVPPQNGGSSESPAAPRTIKVEAAEEPEATRASGPGEPGPQAPSRTPSPHSPNPVRVKTELSSPTPGSSPGPGELTMAGTLFLPQYVFSPDAGTTTVPTAPQASEILAKMSELVHNRLQQGAGSSGAAGTPTGLFSGTKGATCFECEITFNNINNFYVHKRLYCSGRRAPEDPPTVRRPKAATGPARAPAGAAAEPDPSRSSPGPGPREEEASGTTTPEAEAAGRGSEGSQSPGSSVDDAEDDPSRTLCEACNIRFSRHETYTVHKRYYCASRHDPPPRRPPAPTTAPGPAAPALTAPPVRTRRRRKLYELPAAGAPPPAAGPAPVPVVPSPTAELPSSPRPGSASAGPAPALSPSPVPDGPIDLSKRPRRQSPDAPTALPALADYHECTACRVSFHSLEAYLAHKKYSCPAAPLRTTALCPYCPPNGRVRGDLVEHLRQAHGLQVAKPAASPGAEPRTPAERAPRDSPDGRAPRSPSPAPENTPSDPADQGARTPSKGPPAPAPAPGGGGGHRYCRLCNIRFSSLSTFIAHKKYYCSSHAAEHVK</sequence>
<feature type="chain" id="PRO_0000221042" description="Zinc finger protein ZFPM1">
    <location>
        <begin position="1"/>
        <end position="995"/>
    </location>
</feature>
<feature type="zinc finger region" description="CCHC FOG-type 1" evidence="3">
    <location>
        <begin position="249"/>
        <end position="282"/>
    </location>
</feature>
<feature type="zinc finger region" description="C2H2-type 1" evidence="2">
    <location>
        <begin position="303"/>
        <end position="327"/>
    </location>
</feature>
<feature type="zinc finger region" description="C2H2-type 2" evidence="2">
    <location>
        <begin position="333"/>
        <end position="355"/>
    </location>
</feature>
<feature type="zinc finger region" description="C2H2-type 3" evidence="2">
    <location>
        <begin position="361"/>
        <end position="384"/>
    </location>
</feature>
<feature type="zinc finger region" description="CCHC FOG-type 2" evidence="3">
    <location>
        <begin position="584"/>
        <end position="617"/>
    </location>
</feature>
<feature type="zinc finger region" description="CCHC FOG-type 3" evidence="3">
    <location>
        <begin position="690"/>
        <end position="723"/>
    </location>
</feature>
<feature type="zinc finger region" description="CCHC FOG-type 4" evidence="3">
    <location>
        <begin position="830"/>
        <end position="863"/>
    </location>
</feature>
<feature type="zinc finger region" description="C2H2-type 4" evidence="2">
    <location>
        <begin position="868"/>
        <end position="891"/>
    </location>
</feature>
<feature type="zinc finger region" description="CCHC FOG-type 5" evidence="3">
    <location>
        <begin position="957"/>
        <end position="990"/>
    </location>
</feature>
<feature type="region of interest" description="Disordered" evidence="4">
    <location>
        <begin position="1"/>
        <end position="103"/>
    </location>
</feature>
<feature type="region of interest" description="Interaction with TACC3" evidence="10">
    <location>
        <begin position="343"/>
        <end position="354"/>
    </location>
</feature>
<feature type="region of interest" description="Disordered" evidence="4">
    <location>
        <begin position="424"/>
        <end position="526"/>
    </location>
</feature>
<feature type="region of interest" description="Disordered" evidence="4">
    <location>
        <begin position="616"/>
        <end position="694"/>
    </location>
</feature>
<feature type="region of interest" description="Disordered" evidence="4">
    <location>
        <begin position="721"/>
        <end position="827"/>
    </location>
</feature>
<feature type="region of interest" description="Interaction with CTBP2">
    <location>
        <begin position="811"/>
        <end position="817"/>
    </location>
</feature>
<feature type="region of interest" description="Disordered" evidence="4">
    <location>
        <begin position="892"/>
        <end position="960"/>
    </location>
</feature>
<feature type="compositionally biased region" description="Basic residues" evidence="4">
    <location>
        <begin position="1"/>
        <end position="14"/>
    </location>
</feature>
<feature type="compositionally biased region" description="Basic and acidic residues" evidence="4">
    <location>
        <begin position="15"/>
        <end position="36"/>
    </location>
</feature>
<feature type="compositionally biased region" description="Acidic residues" evidence="4">
    <location>
        <begin position="67"/>
        <end position="78"/>
    </location>
</feature>
<feature type="compositionally biased region" description="Acidic residues" evidence="4">
    <location>
        <begin position="86"/>
        <end position="95"/>
    </location>
</feature>
<feature type="compositionally biased region" description="Low complexity" evidence="4">
    <location>
        <begin position="509"/>
        <end position="525"/>
    </location>
</feature>
<feature type="compositionally biased region" description="Low complexity" evidence="4">
    <location>
        <begin position="630"/>
        <end position="652"/>
    </location>
</feature>
<feature type="compositionally biased region" description="Pro residues" evidence="4">
    <location>
        <begin position="728"/>
        <end position="740"/>
    </location>
</feature>
<feature type="compositionally biased region" description="Pro residues" evidence="4">
    <location>
        <begin position="764"/>
        <end position="779"/>
    </location>
</feature>
<feature type="compositionally biased region" description="Low complexity" evidence="4">
    <location>
        <begin position="785"/>
        <end position="800"/>
    </location>
</feature>
<feature type="compositionally biased region" description="Basic and acidic residues" evidence="4">
    <location>
        <begin position="908"/>
        <end position="922"/>
    </location>
</feature>
<feature type="binding site" evidence="3">
    <location>
        <position position="257"/>
    </location>
    <ligand>
        <name>Zn(2+)</name>
        <dbReference type="ChEBI" id="CHEBI:29105"/>
        <label>1</label>
    </ligand>
</feature>
<feature type="binding site" evidence="3">
    <location>
        <position position="260"/>
    </location>
    <ligand>
        <name>Zn(2+)</name>
        <dbReference type="ChEBI" id="CHEBI:29105"/>
        <label>1</label>
    </ligand>
</feature>
<feature type="binding site" evidence="3">
    <location>
        <position position="273"/>
    </location>
    <ligand>
        <name>Zn(2+)</name>
        <dbReference type="ChEBI" id="CHEBI:29105"/>
        <label>1</label>
    </ligand>
</feature>
<feature type="binding site" evidence="3">
    <location>
        <position position="278"/>
    </location>
    <ligand>
        <name>Zn(2+)</name>
        <dbReference type="ChEBI" id="CHEBI:29105"/>
        <label>1</label>
    </ligand>
</feature>
<feature type="binding site" evidence="3">
    <location>
        <position position="592"/>
    </location>
    <ligand>
        <name>Zn(2+)</name>
        <dbReference type="ChEBI" id="CHEBI:29105"/>
        <label>2</label>
    </ligand>
</feature>
<feature type="binding site" evidence="3">
    <location>
        <position position="595"/>
    </location>
    <ligand>
        <name>Zn(2+)</name>
        <dbReference type="ChEBI" id="CHEBI:29105"/>
        <label>2</label>
    </ligand>
</feature>
<feature type="binding site" evidence="3">
    <location>
        <position position="608"/>
    </location>
    <ligand>
        <name>Zn(2+)</name>
        <dbReference type="ChEBI" id="CHEBI:29105"/>
        <label>2</label>
    </ligand>
</feature>
<feature type="binding site" evidence="3">
    <location>
        <position position="613"/>
    </location>
    <ligand>
        <name>Zn(2+)</name>
        <dbReference type="ChEBI" id="CHEBI:29105"/>
        <label>2</label>
    </ligand>
</feature>
<feature type="binding site" evidence="3">
    <location>
        <position position="698"/>
    </location>
    <ligand>
        <name>Zn(2+)</name>
        <dbReference type="ChEBI" id="CHEBI:29105"/>
        <label>3</label>
    </ligand>
</feature>
<feature type="binding site" evidence="3">
    <location>
        <position position="701"/>
    </location>
    <ligand>
        <name>Zn(2+)</name>
        <dbReference type="ChEBI" id="CHEBI:29105"/>
        <label>3</label>
    </ligand>
</feature>
<feature type="binding site" evidence="3">
    <location>
        <position position="714"/>
    </location>
    <ligand>
        <name>Zn(2+)</name>
        <dbReference type="ChEBI" id="CHEBI:29105"/>
        <label>3</label>
    </ligand>
</feature>
<feature type="binding site" evidence="3">
    <location>
        <position position="719"/>
    </location>
    <ligand>
        <name>Zn(2+)</name>
        <dbReference type="ChEBI" id="CHEBI:29105"/>
        <label>3</label>
    </ligand>
</feature>
<feature type="binding site" evidence="3">
    <location>
        <position position="838"/>
    </location>
    <ligand>
        <name>Zn(2+)</name>
        <dbReference type="ChEBI" id="CHEBI:29105"/>
        <label>4</label>
    </ligand>
</feature>
<feature type="binding site" evidence="3">
    <location>
        <position position="841"/>
    </location>
    <ligand>
        <name>Zn(2+)</name>
        <dbReference type="ChEBI" id="CHEBI:29105"/>
        <label>4</label>
    </ligand>
</feature>
<feature type="binding site" evidence="3">
    <location>
        <position position="854"/>
    </location>
    <ligand>
        <name>Zn(2+)</name>
        <dbReference type="ChEBI" id="CHEBI:29105"/>
        <label>4</label>
    </ligand>
</feature>
<feature type="binding site" evidence="3">
    <location>
        <position position="859"/>
    </location>
    <ligand>
        <name>Zn(2+)</name>
        <dbReference type="ChEBI" id="CHEBI:29105"/>
        <label>4</label>
    </ligand>
</feature>
<feature type="binding site" evidence="3">
    <location>
        <position position="965"/>
    </location>
    <ligand>
        <name>Zn(2+)</name>
        <dbReference type="ChEBI" id="CHEBI:29105"/>
        <label>5</label>
    </ligand>
</feature>
<feature type="binding site" evidence="3">
    <location>
        <position position="968"/>
    </location>
    <ligand>
        <name>Zn(2+)</name>
        <dbReference type="ChEBI" id="CHEBI:29105"/>
        <label>5</label>
    </ligand>
</feature>
<feature type="binding site" evidence="3">
    <location>
        <position position="981"/>
    </location>
    <ligand>
        <name>Zn(2+)</name>
        <dbReference type="ChEBI" id="CHEBI:29105"/>
        <label>5</label>
    </ligand>
</feature>
<feature type="binding site" evidence="3">
    <location>
        <position position="986"/>
    </location>
    <ligand>
        <name>Zn(2+)</name>
        <dbReference type="ChEBI" id="CHEBI:29105"/>
        <label>5</label>
    </ligand>
</feature>
<feature type="modified residue" description="Phosphoserine" evidence="1">
    <location>
        <position position="99"/>
    </location>
</feature>
<feature type="modified residue" description="Phosphoserine" evidence="15">
    <location>
        <position position="143"/>
    </location>
</feature>
<feature type="modified residue" description="Phosphoserine" evidence="15">
    <location>
        <position position="286"/>
    </location>
</feature>
<feature type="modified residue" description="Phosphoserine" evidence="1">
    <location>
        <position position="397"/>
    </location>
</feature>
<feature type="modified residue" description="Phosphoserine" evidence="15">
    <location>
        <position position="497"/>
    </location>
</feature>
<feature type="modified residue" description="Phosphoserine" evidence="15">
    <location>
        <position position="500"/>
    </location>
</feature>
<feature type="modified residue" description="Phosphoserine" evidence="1">
    <location>
        <position position="651"/>
    </location>
</feature>
<feature type="modified residue" description="Phosphoserine" evidence="1">
    <location>
        <position position="684"/>
    </location>
</feature>
<feature type="modified residue" description="Phosphoserine" evidence="1">
    <location>
        <position position="803"/>
    </location>
</feature>
<feature type="modified residue" description="Phosphoserine" evidence="15">
    <location>
        <position position="822"/>
    </location>
</feature>
<feature type="modified residue" description="Phosphoserine" evidence="14 15">
    <location>
        <position position="925"/>
    </location>
</feature>
<feature type="modified residue" description="Phosphoserine" evidence="14 15">
    <location>
        <position position="927"/>
    </location>
</feature>
<feature type="mutagenesis site" description="Does not affect the interaction with GATA1." evidence="6">
    <original>V</original>
    <variation>A</variation>
    <location>
        <position position="254"/>
    </location>
</feature>
<feature type="mutagenesis site" description="Impairs interaction with GATA1." evidence="6">
    <original>F</original>
    <variation>A</variation>
    <location>
        <position position="255"/>
    </location>
</feature>
<feature type="mutagenesis site" description="Does not affect the interaction with GATA1." evidence="6">
    <original>P</original>
    <variation>A</variation>
    <location>
        <position position="256"/>
    </location>
</feature>
<feature type="mutagenesis site" description="Does not affect the interaction with GATA1." evidence="6">
    <original>K</original>
    <variation>A</variation>
    <location>
        <position position="258"/>
    </location>
</feature>
<feature type="mutagenesis site" description="Does not affect the interaction with GATA1." evidence="6">
    <original>D</original>
    <variation>A</variation>
    <location>
        <position position="259"/>
    </location>
</feature>
<feature type="mutagenesis site" description="Slightly affects the interaction with GATA1." evidence="6">
    <original>G</original>
    <variation>A</variation>
    <location>
        <position position="261"/>
    </location>
</feature>
<feature type="mutagenesis site" description="Impairs interaction with GATA1." evidence="6">
    <original>I</original>
    <variation>A</variation>
    <location>
        <position position="262"/>
    </location>
</feature>
<feature type="mutagenesis site" description="Does not affect the interaction with GATA1." evidence="6">
    <original>W</original>
    <variation>A</variation>
    <location>
        <position position="263"/>
    </location>
</feature>
<feature type="mutagenesis site" description="Slightly affects the interaction with GATA1." evidence="6">
    <original>R</original>
    <variation>A</variation>
    <location>
        <position position="265"/>
    </location>
</feature>
<feature type="mutagenesis site" description="Does not affect the interaction with GATA1." evidence="6">
    <original>S</original>
    <variation>A</variation>
    <location>
        <position position="266"/>
    </location>
</feature>
<feature type="mutagenesis site" description="Slightly affects the interaction with GATA1." evidence="6">
    <original>E</original>
    <variation>A</variation>
    <location>
        <position position="267"/>
    </location>
</feature>
<feature type="mutagenesis site" description="Does not affect the interaction with GATA1." evidence="6">
    <original>R</original>
    <variation>A</variation>
    <location>
        <position position="268"/>
    </location>
</feature>
<feature type="mutagenesis site" description="Impairs interaction with GATA1." evidence="6">
    <original>N</original>
    <variation>A</variation>
    <location>
        <position position="269"/>
    </location>
</feature>
<feature type="mutagenesis site" description="Does not affect the interaction with GATA1." evidence="6">
    <original>Q</original>
    <variation>A</variation>
    <location>
        <position position="271"/>
    </location>
</feature>
<feature type="mutagenesis site" description="Slightly affects the interaction with GATA1." evidence="6">
    <original>L</original>
    <variation>A</variation>
    <location>
        <position position="274"/>
    </location>
</feature>
<feature type="mutagenesis site" description="Does not affect the interaction with GATA1." evidence="6">
    <original>L</original>
    <variation>A</variation>
    <location>
        <position position="275"/>
    </location>
</feature>
<feature type="mutagenesis site" description="Slightly affects the interaction with GATA1." evidence="6">
    <original>Y</original>
    <variation>A</variation>
    <location>
        <position position="276"/>
    </location>
</feature>
<feature type="mutagenesis site" description="Impairs interaction with GATA1. Strongly impairs interaction with GATA1; when associated with A-612; A-718 and/or A-985." evidence="6">
    <original>Y</original>
    <variation>A</variation>
    <location>
        <position position="277"/>
    </location>
</feature>
<feature type="mutagenesis site" description="Does not affect the interaction with GATA1." evidence="6">
    <original>S</original>
    <variation>A</variation>
    <location>
        <position position="280"/>
    </location>
</feature>
<feature type="mutagenesis site" description="Does not affect the interaction with GATA1." evidence="6">
    <original>R</original>
    <variation>A</variation>
    <location>
        <position position="281"/>
    </location>
</feature>
<feature type="mutagenesis site" description="No effect on interaction with TACC3." evidence="10">
    <original>V</original>
    <variation>A</variation>
    <location>
        <position position="334"/>
    </location>
</feature>
<feature type="mutagenesis site" description="No effect on interaction with TACC3." evidence="10">
    <original>L</original>
    <variation>A</variation>
    <location>
        <position position="336"/>
    </location>
</feature>
<feature type="mutagenesis site" description="No effect on interaction with TACC3." evidence="10">
    <original>L</original>
    <variation>A</variation>
    <location>
        <position position="339"/>
    </location>
</feature>
<feature type="mutagenesis site" description="No effect on interaction with TACC3." evidence="10">
    <original>S</original>
    <variation>A</variation>
    <location>
        <position position="340"/>
    </location>
</feature>
<feature type="mutagenesis site" description="Impairs interaction with TACC3." evidence="10">
    <original>T</original>
    <variation>A</variation>
    <location>
        <position position="343"/>
    </location>
</feature>
<feature type="mutagenesis site" description="Abolishes interaction with TACC3." evidence="10">
    <original>T</original>
    <variation>A</variation>
    <location>
        <position position="344"/>
    </location>
</feature>
<feature type="mutagenesis site" description="No effect on interaction with TACC3." evidence="10">
    <original>K</original>
    <variation>A</variation>
    <location>
        <position position="345"/>
    </location>
</feature>
<feature type="mutagenesis site" description="No effect on interaction with TACC3." evidence="10">
    <original>A</original>
    <variation>D</variation>
    <location>
        <position position="346"/>
    </location>
</feature>
<feature type="mutagenesis site" description="Abolishes interaction with TACC3." evidence="10">
    <original>N</original>
    <variation>A</variation>
    <location>
        <position position="347"/>
    </location>
</feature>
<feature type="mutagenesis site" description="No effect on interaction with TACC3." evidence="10">
    <original>E</original>
    <variation>A</variation>
    <location>
        <position position="349"/>
    </location>
</feature>
<feature type="mutagenesis site" description="Abolishes interaction with TACC3." evidence="10">
    <original>R</original>
    <variation>A</variation>
    <location>
        <position position="350"/>
    </location>
</feature>
<feature type="mutagenesis site" description="No effect on interaction with TACC3." evidence="10">
    <original>L</original>
    <variation>A</variation>
    <location>
        <position position="352"/>
    </location>
</feature>
<feature type="mutagenesis site" description="No effect on interaction with TACC3." evidence="10">
    <original>K</original>
    <variation>A</variation>
    <location>
        <position position="353"/>
    </location>
</feature>
<feature type="mutagenesis site" description="Abolishes interaction with TACC3." evidence="10">
    <original>V</original>
    <variation>A</variation>
    <location>
        <position position="354"/>
    </location>
</feature>
<feature type="mutagenesis site" description="No effect on interaction with TACC3." evidence="10">
    <original>T</original>
    <variation>A</variation>
    <location>
        <position position="356"/>
    </location>
</feature>
<feature type="mutagenesis site" description="No effect on interaction with TACC3." evidence="10">
    <original>D</original>
    <variation>A</variation>
    <location>
        <position position="357"/>
    </location>
</feature>
<feature type="mutagenesis site" description="Impairs interaction with GATA1. Strongly impairs interaction with GATA1; when associated with A-277; A-718 and/or A-985." evidence="6">
    <original>Y</original>
    <variation>A</variation>
    <location>
        <position position="612"/>
    </location>
</feature>
<feature type="mutagenesis site" description="Abolishes interaction with GATA1." evidence="13">
    <original>C</original>
    <variation>A</variation>
    <location>
        <position position="698"/>
    </location>
</feature>
<feature type="mutagenesis site" description="Able to partially restore the interaction with the G-205 GATA1 mutant, which is usually unable to interact with ZFPM1." evidence="5">
    <original>S</original>
    <variation>R</variation>
    <location>
        <position position="706"/>
    </location>
</feature>
<feature type="mutagenesis site" description="Impairs interaction with GATA1. Strongly impairs interaction with GATA1; when associated with A-277; A-612 and/or A-985." evidence="6">
    <original>Y</original>
    <variation>A</variation>
    <location>
        <position position="718"/>
    </location>
</feature>
<feature type="mutagenesis site" description="Abolishes interaction with GATA1." evidence="13">
    <original>C</original>
    <variation>A</variation>
    <location>
        <position position="719"/>
    </location>
</feature>
<feature type="mutagenesis site" description="Transforms the C2HC-type zinc finger into a C2H2-type, leading to abolition of interaction with GATA1." evidence="13">
    <original>C</original>
    <variation>H</variation>
    <location>
        <position position="719"/>
    </location>
</feature>
<feature type="mutagenesis site" description="Abolishes interaction with CTBP2." evidence="6">
    <original>PIDL</original>
    <variation>AIAA</variation>
    <location>
        <begin position="811"/>
        <end position="814"/>
    </location>
</feature>
<feature type="mutagenesis site" description="Abolishes interaction with CTBP2; it however does not abolish the corepressor activity in erythropoiesis." evidence="7">
    <original>DL</original>
    <variation>AS</variation>
    <location>
        <begin position="813"/>
        <end position="814"/>
    </location>
</feature>
<feature type="mutagenesis site" description="Slightly affects the interaction with GATA1. Strongly impairs interaction with GATA1; when associated with A-277; A-612 and/or A-718." evidence="6">
    <original>Y</original>
    <variation>A</variation>
    <location>
        <position position="985"/>
    </location>
</feature>
<feature type="strand" evidence="17">
    <location>
        <begin position="107"/>
        <end position="112"/>
    </location>
</feature>
<feature type="strand" evidence="17">
    <location>
        <begin position="115"/>
        <end position="122"/>
    </location>
</feature>
<feature type="turn" evidence="17">
    <location>
        <begin position="144"/>
        <end position="146"/>
    </location>
</feature>
<feature type="helix" evidence="17">
    <location>
        <begin position="162"/>
        <end position="164"/>
    </location>
</feature>
<feature type="strand" evidence="17">
    <location>
        <begin position="168"/>
        <end position="182"/>
    </location>
</feature>
<feature type="strand" evidence="17">
    <location>
        <begin position="185"/>
        <end position="190"/>
    </location>
</feature>
<feature type="strand" evidence="17">
    <location>
        <begin position="201"/>
        <end position="204"/>
    </location>
</feature>
<feature type="strand" evidence="16">
    <location>
        <begin position="336"/>
        <end position="338"/>
    </location>
</feature>
<feature type="strand" evidence="16">
    <location>
        <begin position="341"/>
        <end position="344"/>
    </location>
</feature>
<feature type="helix" evidence="16">
    <location>
        <begin position="345"/>
        <end position="352"/>
    </location>
</feature>
<feature type="helix" evidence="16">
    <location>
        <begin position="353"/>
        <end position="355"/>
    </location>
</feature>
<gene>
    <name type="primary">Zfpm1</name>
    <name type="synonym">Fog</name>
    <name type="synonym">Fog1</name>
</gene>
<keyword id="KW-0002">3D-structure</keyword>
<keyword id="KW-0010">Activator</keyword>
<keyword id="KW-0238">DNA-binding</keyword>
<keyword id="KW-0479">Metal-binding</keyword>
<keyword id="KW-0539">Nucleus</keyword>
<keyword id="KW-0597">Phosphoprotein</keyword>
<keyword id="KW-1185">Reference proteome</keyword>
<keyword id="KW-0677">Repeat</keyword>
<keyword id="KW-0678">Repressor</keyword>
<keyword id="KW-0804">Transcription</keyword>
<keyword id="KW-0805">Transcription regulation</keyword>
<keyword id="KW-0862">Zinc</keyword>
<keyword id="KW-0863">Zinc-finger</keyword>
<protein>
    <recommendedName>
        <fullName>Zinc finger protein ZFPM1</fullName>
    </recommendedName>
    <alternativeName>
        <fullName>Friend of GATA protein 1</fullName>
        <shortName>FOG-1</shortName>
        <shortName>Friend of GATA 1</shortName>
    </alternativeName>
    <alternativeName>
        <fullName>Zinc finger protein multitype 1</fullName>
    </alternativeName>
</protein>
<name>FOG1_MOUSE</name>
<comment type="function">
    <text evidence="5 6 7 8 9 11 12">Transcription regulator that plays an essential role in erythroid and megakaryocytic cell differentiation. Essential cofactor that acts via the formation of a heterodimer with transcription factors of the GATA family GATA1, GATA2 and GATA3. Such heterodimer can both activate or repress transcriptional activity, depending on the cell and promoter context. The heterodimer formed with GATA proteins is essential to activate expression of genes such as NFE2, ITGA2B, alpha- and beta-globin, while it represses expression of KLF1. May be involved in regulation of some genes in gonads. May also be involved in cardiac development, in a non-redundant way with ZFPM2/FOG2.</text>
</comment>
<comment type="subunit">
    <text evidence="6 7 10 11 13">Interacts with the N-terminal zinc-finger of GATA1, GATA2 and GATA3. Interacts with corepressor CTBP2; this interaction is however not essential for corepressor activity in erythropoiesis. Interacts with TACC3.</text>
</comment>
<comment type="interaction">
    <interactant intactId="EBI-4394596">
        <id>O35615</id>
    </interactant>
    <interactant intactId="EBI-3903251">
        <id>P17679</id>
        <label>Gata1</label>
    </interactant>
    <organismsDiffer>false</organismsDiffer>
    <experiments>7</experiments>
</comment>
<comment type="interaction">
    <interactant intactId="EBI-4394596">
        <id>O35615</id>
    </interactant>
    <interactant intactId="EBI-1216284">
        <id>Q6ZQ88</id>
        <label>Kdm1a</label>
    </interactant>
    <organismsDiffer>false</organismsDiffer>
    <experiments>2</experiments>
</comment>
<comment type="interaction">
    <interactant intactId="EBI-4394596">
        <id>O35615</id>
    </interactant>
    <interactant intactId="EBI-2553611">
        <id>Q9JJ11</id>
        <label>Tacc3</label>
    </interactant>
    <organismsDiffer>false</organismsDiffer>
    <experiments>7</experiments>
</comment>
<comment type="interaction">
    <interactant intactId="EBI-4394596">
        <id>O35615</id>
    </interactant>
    <interactant intactId="EBI-3909284">
        <id>P15976</id>
        <label>GATA1</label>
    </interactant>
    <organismsDiffer>true</organismsDiffer>
    <experiments>5</experiments>
</comment>
<comment type="subcellular location">
    <subcellularLocation>
        <location evidence="11">Nucleus</location>
    </subcellularLocation>
</comment>
<comment type="tissue specificity">
    <text evidence="9 11">Mainly expressed in hematopoietic tissues. Expressed in the spleen, a primary site of hematopoiesis in the adult mouse, as well as in the liver and testis, but not in the heart, brain, lung, kidney, or skeletal muscle. Among hematopoietic cell lines, it is strongly expressed in erythroid and megakaryocytic cell lines. Expressed at low level in several lymphoid and early myeloid cell lines. Not expressed in mast cell and macrophage lines. Expressed in the heart, where it colocalizes with GATA4, GATA5 and GATA6.</text>
</comment>
<comment type="developmental stage">
    <text evidence="11">First expressed in two extraembryonic mesodermal derivatives, the yolk sac and the allantois in 8.5 dpc embryos. Localized to the embryonic red blood cells within the yolk sac blood islands.</text>
</comment>
<comment type="domain">
    <text>The CCHC FOG-type zinc fingers 1, 2, 3 and 5 bind directly to GATA-type zinc fingers. The Tyr residue adjacent to the last Cys of the CCHC FOG-type zinc finger is essential for the interaction with GATA-type zinc fingers.</text>
</comment>
<comment type="similarity">
    <text evidence="3">Belongs to the FOG (Friend of GATA) family.</text>
</comment>
<reference key="1">
    <citation type="journal article" date="1997" name="Cell">
        <title>FOG, a multitype zinc finger protein, acts as a cofactor for transcription factor GATA-1 in erythroid and megakaryocytic differentiation.</title>
        <authorList>
            <person name="Tsang A.P."/>
            <person name="Visvader J.E."/>
            <person name="Turner C.A."/>
            <person name="Fujiwara Y."/>
            <person name="Yu C."/>
            <person name="Weiss M.J."/>
            <person name="Crossley M."/>
            <person name="Orkin S.H."/>
        </authorList>
    </citation>
    <scope>NUCLEOTIDE SEQUENCE [MRNA]</scope>
    <scope>FUNCTION</scope>
    <scope>SUBCELLULAR LOCATION</scope>
    <scope>TISSUE SPECIFICITY</scope>
    <scope>DEVELOPMENTAL STAGE</scope>
    <scope>INTERACTION WITH GATA1; GATA2 AND GATA3</scope>
    <source>
        <tissue>Erythroleukemia</tissue>
    </source>
</reference>
<reference key="2">
    <citation type="journal article" date="1998" name="Genes Dev.">
        <title>Failure of megakaryopoiesis and arrested erythropoiesis in mice lacking the GATA-1 transcriptional cofactor FOG.</title>
        <authorList>
            <person name="Tsang A.P."/>
            <person name="Fujiwara Y."/>
            <person name="Hom D.B."/>
            <person name="Orkin S.H."/>
        </authorList>
    </citation>
    <scope>FUNCTION</scope>
</reference>
<reference key="3">
    <citation type="journal article" date="1998" name="J. Biol. Chem.">
        <title>Key residues characteristic of GATA N-fingers are recognized by FOG.</title>
        <authorList>
            <person name="Fox A.H."/>
            <person name="Kowalski K."/>
            <person name="King G.F."/>
            <person name="Mackay J.P."/>
            <person name="Crossley M."/>
        </authorList>
    </citation>
    <scope>INTERACTION WITH GATA1</scope>
    <scope>MUTAGENESIS OF CYS-698 AND CYS-719</scope>
</reference>
<reference key="4">
    <citation type="journal article" date="1999" name="Mol. Cell">
        <title>Use of altered specificity mutants to probe a specific protein-protein interaction in differentiation: the GATA-1:FOG complex.</title>
        <authorList>
            <person name="Crispino J.D."/>
            <person name="Lodish M.B."/>
            <person name="MacKay J.P."/>
            <person name="Orkin S.H."/>
        </authorList>
    </citation>
    <scope>FUNCTION</scope>
    <scope>MUTAGENESIS OF SER-706</scope>
</reference>
<reference key="5">
    <citation type="journal article" date="1999" name="EMBO J.">
        <title>Transcriptional cofactors of the FOG family interact with GATA proteins by means of multiple zinc fingers.</title>
        <authorList>
            <person name="Fox A.H."/>
            <person name="Liew C."/>
            <person name="Holmes M."/>
            <person name="Kowalski K."/>
            <person name="Mackay J."/>
            <person name="Crossley M."/>
        </authorList>
    </citation>
    <scope>FUNCTION</scope>
    <scope>INTERACTION WITH GATA1 AND CTBP2</scope>
    <scope>MUTAGENESIS OF VAL-254; PHE-255; PRO-256; LYS-258; ASP-259; GLY-261; ILE-262; TRP-263; ARG-265; SER-266; GLU-267; ARG-268; ASN-269; GLN-271; LEU-274; LEU-275; TYR-276; TYR-277; SER-280; ARG-281; 811-PRO--LEU-814; TYR-612; TYR-718 AND TYR-985</scope>
</reference>
<reference key="6">
    <citation type="journal article" date="2002" name="Mol. Cell. Biol.">
        <title>Interaction between FOG-1 and the corepressor C-terminal binding protein is dispensable for normal erythropoiesis in vivo.</title>
        <authorList>
            <person name="Katz S.G."/>
            <person name="Cantor A.B."/>
            <person name="Orkin S.H."/>
        </authorList>
    </citation>
    <scope>FUNCTION</scope>
    <scope>INTERACTION WITH CTBP2</scope>
    <scope>MUTAGENESIS OF 813-ASP-LEU-814</scope>
</reference>
<reference key="7">
    <citation type="journal article" date="2002" name="EMBO J.">
        <title>Control of megakaryocyte-specific gene expression by GATA-1 and FOG-1: role of Ets transcription factors.</title>
        <authorList>
            <person name="Wang X."/>
            <person name="Crispino J.D."/>
            <person name="Letting D.L."/>
            <person name="Nakazawa M."/>
            <person name="Poncz M."/>
            <person name="Blobel G.A."/>
        </authorList>
    </citation>
    <scope>FUNCTION</scope>
</reference>
<reference key="8">
    <citation type="journal article" date="2003" name="Proc. Natl. Acad. Sci. U.S.A.">
        <title>Endothelial lineage-mediated loss of the GATA cofactor Friend of GATA 1 impairs cardiac development.</title>
        <authorList>
            <person name="Katz S.G."/>
            <person name="Williams A."/>
            <person name="Yang J."/>
            <person name="Fujiwara Y."/>
            <person name="Tsang A.P."/>
            <person name="Epstein J.A."/>
            <person name="Orkin S.H."/>
        </authorList>
    </citation>
    <scope>FUNCTION</scope>
    <scope>TISSUE SPECIFICITY</scope>
</reference>
<reference key="9">
    <citation type="journal article" date="2007" name="Proc. Natl. Acad. Sci. U.S.A.">
        <title>Large-scale phosphorylation analysis of mouse liver.</title>
        <authorList>
            <person name="Villen J."/>
            <person name="Beausoleil S.A."/>
            <person name="Gerber S.A."/>
            <person name="Gygi S.P."/>
        </authorList>
    </citation>
    <scope>PHOSPHORYLATION [LARGE SCALE ANALYSIS] AT SER-925 AND SER-927</scope>
    <scope>IDENTIFICATION BY MASS SPECTROMETRY [LARGE SCALE ANALYSIS]</scope>
    <source>
        <tissue>Liver</tissue>
    </source>
</reference>
<reference key="10">
    <citation type="journal article" date="2010" name="Cell">
        <title>A tissue-specific atlas of mouse protein phosphorylation and expression.</title>
        <authorList>
            <person name="Huttlin E.L."/>
            <person name="Jedrychowski M.P."/>
            <person name="Elias J.E."/>
            <person name="Goswami T."/>
            <person name="Rad R."/>
            <person name="Beausoleil S.A."/>
            <person name="Villen J."/>
            <person name="Haas W."/>
            <person name="Sowa M.E."/>
            <person name="Gygi S.P."/>
        </authorList>
    </citation>
    <scope>PHOSPHORYLATION [LARGE SCALE ANALYSIS] AT SER-143; SER-286; SER-497; SER-500; SER-822; SER-925 AND SER-927</scope>
    <scope>IDENTIFICATION BY MASS SPECTROMETRY [LARGE SCALE ANALYSIS]</scope>
    <source>
        <tissue>Brown adipose tissue</tissue>
        <tissue>Heart</tissue>
        <tissue>Kidney</tissue>
        <tissue>Liver</tissue>
        <tissue>Lung</tissue>
        <tissue>Pancreas</tissue>
        <tissue>Spleen</tissue>
        <tissue>Testis</tissue>
    </source>
</reference>
<reference key="11">
    <citation type="journal article" date="2004" name="J. Biol. Chem.">
        <title>A classic zinc finger from Friend of GATA mediates an interaction with the coiled-coil of transforming acidic coiled-coil 3.</title>
        <authorList>
            <person name="Simpson R.J.Y."/>
            <person name="Yi Lee S.H."/>
            <person name="Bartle N."/>
            <person name="Sum E.Y."/>
            <person name="Visvader J.E."/>
            <person name="Matthews J.M."/>
            <person name="Mackay J.P."/>
            <person name="Crossley M."/>
        </authorList>
    </citation>
    <scope>STRUCTURE BY NMR OF 328-360</scope>
    <scope>INTERACTION WITH TACC3</scope>
    <scope>MUTAGENESIS OF VAL-334; LEU-336; LEU-339; SER-340; THR-343; THR-344; LYS-345; ALA-346; ASN-347; GLU-349; ARG-350; LEU-352; LYS-353; VAL-354; THR-356 AND ASP-357</scope>
</reference>